<comment type="subunit">
    <text evidence="1">Component of the mitochondrial ribosome large subunit (39S) which comprises a 16S rRNA and about 50 distinct proteins.</text>
</comment>
<comment type="subcellular location">
    <subcellularLocation>
        <location evidence="1">Mitochondrion</location>
    </subcellularLocation>
</comment>
<comment type="similarity">
    <text evidence="3">Belongs to the universal ribosomal protein uL22 family.</text>
</comment>
<sequence length="204" mass="23541">MAASITASVWGTLLKIHRGLTASGCLPQSCVHTSAVLERSRHWEMKNRIVYPPQLPDEPRRPAEVYHCRKQIKYSKDKMWYLAKLIRGMSVDQAIAQLEFNDKKGAKIMKEVLLEAQDLAVRNHNVEFKSNLYVAESFSNKGKYLKRIRYHGRGMFGIMDKVYCHYFVKLVEGPPSPKEEPMTGFQQAKEYVQQLRSRTITHGL</sequence>
<gene>
    <name type="primary">mrpl22</name>
</gene>
<protein>
    <recommendedName>
        <fullName evidence="3">Large ribosomal subunit protein uL22m</fullName>
    </recommendedName>
    <alternativeName>
        <fullName>39S ribosomal protein L22, mitochondrial</fullName>
        <shortName>L22mt</shortName>
        <shortName>MRP-L22</shortName>
    </alternativeName>
</protein>
<name>RM22_XENTR</name>
<organism>
    <name type="scientific">Xenopus tropicalis</name>
    <name type="common">Western clawed frog</name>
    <name type="synonym">Silurana tropicalis</name>
    <dbReference type="NCBI Taxonomy" id="8364"/>
    <lineage>
        <taxon>Eukaryota</taxon>
        <taxon>Metazoa</taxon>
        <taxon>Chordata</taxon>
        <taxon>Craniata</taxon>
        <taxon>Vertebrata</taxon>
        <taxon>Euteleostomi</taxon>
        <taxon>Amphibia</taxon>
        <taxon>Batrachia</taxon>
        <taxon>Anura</taxon>
        <taxon>Pipoidea</taxon>
        <taxon>Pipidae</taxon>
        <taxon>Xenopodinae</taxon>
        <taxon>Xenopus</taxon>
        <taxon>Silurana</taxon>
    </lineage>
</organism>
<dbReference type="EMBL" id="BC118825">
    <property type="protein sequence ID" value="AAI18826.1"/>
    <property type="molecule type" value="mRNA"/>
</dbReference>
<dbReference type="RefSeq" id="NP_001072914.1">
    <property type="nucleotide sequence ID" value="NM_001079446.1"/>
</dbReference>
<dbReference type="SMR" id="Q0VFH6"/>
<dbReference type="FunCoup" id="Q0VFH6">
    <property type="interactions" value="1690"/>
</dbReference>
<dbReference type="STRING" id="8364.ENSXETP00000031903"/>
<dbReference type="PaxDb" id="8364-ENSXETP00000042033"/>
<dbReference type="DNASU" id="780376"/>
<dbReference type="GeneID" id="780376"/>
<dbReference type="KEGG" id="xtr:780376"/>
<dbReference type="AGR" id="Xenbase:XB-GENE-962521"/>
<dbReference type="CTD" id="29093"/>
<dbReference type="Xenbase" id="XB-GENE-962521">
    <property type="gene designation" value="mrpl22"/>
</dbReference>
<dbReference type="eggNOG" id="KOG1711">
    <property type="taxonomic scope" value="Eukaryota"/>
</dbReference>
<dbReference type="HOGENOM" id="CLU_100005_1_0_1"/>
<dbReference type="InParanoid" id="Q0VFH6"/>
<dbReference type="OrthoDB" id="416470at2759"/>
<dbReference type="TreeFam" id="TF315111"/>
<dbReference type="Proteomes" id="UP000008143">
    <property type="component" value="Chromosome 3"/>
</dbReference>
<dbReference type="Bgee" id="ENSXETG00000019403">
    <property type="expression patterns" value="Expressed in egg cell and 13 other cell types or tissues"/>
</dbReference>
<dbReference type="GO" id="GO:0005762">
    <property type="term" value="C:mitochondrial large ribosomal subunit"/>
    <property type="evidence" value="ECO:0000250"/>
    <property type="project" value="UniProtKB"/>
</dbReference>
<dbReference type="GO" id="GO:0005739">
    <property type="term" value="C:mitochondrion"/>
    <property type="evidence" value="ECO:0000250"/>
    <property type="project" value="UniProtKB"/>
</dbReference>
<dbReference type="GO" id="GO:0003735">
    <property type="term" value="F:structural constituent of ribosome"/>
    <property type="evidence" value="ECO:0007669"/>
    <property type="project" value="InterPro"/>
</dbReference>
<dbReference type="GO" id="GO:0006412">
    <property type="term" value="P:translation"/>
    <property type="evidence" value="ECO:0007669"/>
    <property type="project" value="InterPro"/>
</dbReference>
<dbReference type="CDD" id="cd00336">
    <property type="entry name" value="Ribosomal_L22"/>
    <property type="match status" value="1"/>
</dbReference>
<dbReference type="FunFam" id="3.90.470.10:FF:000009">
    <property type="entry name" value="39S ribosomal protein L22, mitochondrial"/>
    <property type="match status" value="1"/>
</dbReference>
<dbReference type="Gene3D" id="3.90.470.10">
    <property type="entry name" value="Ribosomal protein L22/L17"/>
    <property type="match status" value="1"/>
</dbReference>
<dbReference type="InterPro" id="IPR001063">
    <property type="entry name" value="Ribosomal_uL22"/>
</dbReference>
<dbReference type="InterPro" id="IPR047867">
    <property type="entry name" value="Ribosomal_uL22_bac/org-type"/>
</dbReference>
<dbReference type="InterPro" id="IPR036394">
    <property type="entry name" value="Ribosomal_uL22_sf"/>
</dbReference>
<dbReference type="PANTHER" id="PTHR13501">
    <property type="entry name" value="CHLOROPLAST 50S RIBOSOMAL PROTEIN L22-RELATED"/>
    <property type="match status" value="1"/>
</dbReference>
<dbReference type="PANTHER" id="PTHR13501:SF8">
    <property type="entry name" value="LARGE RIBOSOMAL SUBUNIT PROTEIN UL22M"/>
    <property type="match status" value="1"/>
</dbReference>
<dbReference type="Pfam" id="PF00237">
    <property type="entry name" value="Ribosomal_L22"/>
    <property type="match status" value="1"/>
</dbReference>
<dbReference type="SUPFAM" id="SSF54843">
    <property type="entry name" value="Ribosomal protein L22"/>
    <property type="match status" value="1"/>
</dbReference>
<accession>Q0VFH6</accession>
<reference key="1">
    <citation type="submission" date="2006-07" db="EMBL/GenBank/DDBJ databases">
        <authorList>
            <consortium name="NIH - Xenopus Gene Collection (XGC) project"/>
        </authorList>
    </citation>
    <scope>NUCLEOTIDE SEQUENCE [LARGE SCALE MRNA]</scope>
    <source>
        <tissue>Testis</tissue>
    </source>
</reference>
<proteinExistence type="evidence at transcript level"/>
<evidence type="ECO:0000250" key="1">
    <source>
        <dbReference type="UniProtKB" id="Q9NWU5"/>
    </source>
</evidence>
<evidence type="ECO:0000255" key="2"/>
<evidence type="ECO:0000305" key="3"/>
<feature type="transit peptide" description="Mitochondrion" evidence="2">
    <location>
        <begin position="1"/>
        <end position="27"/>
    </location>
</feature>
<feature type="chain" id="PRO_0000261647" description="Large ribosomal subunit protein uL22m">
    <location>
        <begin position="28"/>
        <end position="204"/>
    </location>
</feature>
<keyword id="KW-0496">Mitochondrion</keyword>
<keyword id="KW-1185">Reference proteome</keyword>
<keyword id="KW-0687">Ribonucleoprotein</keyword>
<keyword id="KW-0689">Ribosomal protein</keyword>
<keyword id="KW-0809">Transit peptide</keyword>